<sequence length="289" mass="31613">MFNGSLVALVTPMQENGEIDYSNLKELVEWHLENDTDGLVILGTTGESPTITAEERHKIIRQVVDQVNKKIPIIVGTGANSTVHTIEMTQQAMELGADAALIVTPYYNKPTQEGLFQYFKTIAEAVPIAQILYNVPSRTACDLLPETVIRIAKCSNVVGLKEATGDIQRVKQLKAEDLDLLSGDDKTAMDFMLAGGKGVISVVANVVPKPYHAFCITAVSGNVELAKKENDQLSPLYDSLFVESNPIPVKWALSQMGVIPKGIRLPLTPLSERYHAKVRESLQQVGIKC</sequence>
<keyword id="KW-0028">Amino-acid biosynthesis</keyword>
<keyword id="KW-0963">Cytoplasm</keyword>
<keyword id="KW-0220">Diaminopimelate biosynthesis</keyword>
<keyword id="KW-0456">Lyase</keyword>
<keyword id="KW-0457">Lysine biosynthesis</keyword>
<keyword id="KW-0704">Schiff base</keyword>
<proteinExistence type="inferred from homology"/>
<evidence type="ECO:0000255" key="1">
    <source>
        <dbReference type="HAMAP-Rule" id="MF_00418"/>
    </source>
</evidence>
<evidence type="ECO:0000305" key="2"/>
<accession>A9NDT3</accession>
<comment type="function">
    <text evidence="1">Catalyzes the condensation of (S)-aspartate-beta-semialdehyde [(S)-ASA] and pyruvate to 4-hydroxy-tetrahydrodipicolinate (HTPA).</text>
</comment>
<comment type="catalytic activity">
    <reaction evidence="1">
        <text>L-aspartate 4-semialdehyde + pyruvate = (2S,4S)-4-hydroxy-2,3,4,5-tetrahydrodipicolinate + H2O + H(+)</text>
        <dbReference type="Rhea" id="RHEA:34171"/>
        <dbReference type="ChEBI" id="CHEBI:15361"/>
        <dbReference type="ChEBI" id="CHEBI:15377"/>
        <dbReference type="ChEBI" id="CHEBI:15378"/>
        <dbReference type="ChEBI" id="CHEBI:67139"/>
        <dbReference type="ChEBI" id="CHEBI:537519"/>
        <dbReference type="EC" id="4.3.3.7"/>
    </reaction>
</comment>
<comment type="pathway">
    <text evidence="1">Amino-acid biosynthesis; L-lysine biosynthesis via DAP pathway; (S)-tetrahydrodipicolinate from L-aspartate: step 3/4.</text>
</comment>
<comment type="subunit">
    <text evidence="1">Homotetramer; dimer of dimers.</text>
</comment>
<comment type="subcellular location">
    <subcellularLocation>
        <location evidence="1">Cytoplasm</location>
    </subcellularLocation>
</comment>
<comment type="similarity">
    <text evidence="1">Belongs to the DapA family.</text>
</comment>
<comment type="caution">
    <text evidence="2">Was originally thought to be a dihydrodipicolinate synthase (DHDPS), catalyzing the condensation of (S)-aspartate-beta-semialdehyde [(S)-ASA] and pyruvate to dihydrodipicolinate (DHDP). However, it was shown in E.coli that the product of the enzymatic reaction is not dihydrodipicolinate but in fact (4S)-4-hydroxy-2,3,4,5-tetrahydro-(2S)-dipicolinic acid (HTPA), and that the consecutive dehydration reaction leading to DHDP is not spontaneous but catalyzed by DapB.</text>
</comment>
<name>DAPA_COXBR</name>
<protein>
    <recommendedName>
        <fullName evidence="1">4-hydroxy-tetrahydrodipicolinate synthase</fullName>
        <shortName evidence="1">HTPA synthase</shortName>
        <ecNumber evidence="1">4.3.3.7</ecNumber>
    </recommendedName>
</protein>
<feature type="chain" id="PRO_1000080527" description="4-hydroxy-tetrahydrodipicolinate synthase">
    <location>
        <begin position="1"/>
        <end position="289"/>
    </location>
</feature>
<feature type="active site" description="Proton donor/acceptor" evidence="1">
    <location>
        <position position="133"/>
    </location>
</feature>
<feature type="active site" description="Schiff-base intermediate with substrate" evidence="1">
    <location>
        <position position="161"/>
    </location>
</feature>
<feature type="binding site" evidence="1">
    <location>
        <position position="45"/>
    </location>
    <ligand>
        <name>pyruvate</name>
        <dbReference type="ChEBI" id="CHEBI:15361"/>
    </ligand>
</feature>
<feature type="binding site" evidence="1">
    <location>
        <position position="200"/>
    </location>
    <ligand>
        <name>pyruvate</name>
        <dbReference type="ChEBI" id="CHEBI:15361"/>
    </ligand>
</feature>
<feature type="site" description="Part of a proton relay during catalysis" evidence="1">
    <location>
        <position position="44"/>
    </location>
</feature>
<feature type="site" description="Part of a proton relay during catalysis" evidence="1">
    <location>
        <position position="107"/>
    </location>
</feature>
<dbReference type="EC" id="4.3.3.7" evidence="1"/>
<dbReference type="EMBL" id="CP000890">
    <property type="protein sequence ID" value="ABX77412.1"/>
    <property type="molecule type" value="Genomic_DNA"/>
</dbReference>
<dbReference type="RefSeq" id="WP_005770744.1">
    <property type="nucleotide sequence ID" value="NC_010117.1"/>
</dbReference>
<dbReference type="SMR" id="A9NDT3"/>
<dbReference type="KEGG" id="cbs:COXBURSA331_A1365"/>
<dbReference type="HOGENOM" id="CLU_049343_7_1_6"/>
<dbReference type="UniPathway" id="UPA00034">
    <property type="reaction ID" value="UER00017"/>
</dbReference>
<dbReference type="GO" id="GO:0005829">
    <property type="term" value="C:cytosol"/>
    <property type="evidence" value="ECO:0007669"/>
    <property type="project" value="TreeGrafter"/>
</dbReference>
<dbReference type="GO" id="GO:0008840">
    <property type="term" value="F:4-hydroxy-tetrahydrodipicolinate synthase activity"/>
    <property type="evidence" value="ECO:0007669"/>
    <property type="project" value="UniProtKB-UniRule"/>
</dbReference>
<dbReference type="GO" id="GO:0019877">
    <property type="term" value="P:diaminopimelate biosynthetic process"/>
    <property type="evidence" value="ECO:0007669"/>
    <property type="project" value="UniProtKB-UniRule"/>
</dbReference>
<dbReference type="GO" id="GO:0009089">
    <property type="term" value="P:lysine biosynthetic process via diaminopimelate"/>
    <property type="evidence" value="ECO:0007669"/>
    <property type="project" value="UniProtKB-UniRule"/>
</dbReference>
<dbReference type="CDD" id="cd00950">
    <property type="entry name" value="DHDPS"/>
    <property type="match status" value="1"/>
</dbReference>
<dbReference type="Gene3D" id="3.20.20.70">
    <property type="entry name" value="Aldolase class I"/>
    <property type="match status" value="1"/>
</dbReference>
<dbReference type="HAMAP" id="MF_00418">
    <property type="entry name" value="DapA"/>
    <property type="match status" value="1"/>
</dbReference>
<dbReference type="InterPro" id="IPR013785">
    <property type="entry name" value="Aldolase_TIM"/>
</dbReference>
<dbReference type="InterPro" id="IPR005263">
    <property type="entry name" value="DapA"/>
</dbReference>
<dbReference type="InterPro" id="IPR002220">
    <property type="entry name" value="DapA-like"/>
</dbReference>
<dbReference type="InterPro" id="IPR020625">
    <property type="entry name" value="Schiff_base-form_aldolases_AS"/>
</dbReference>
<dbReference type="InterPro" id="IPR020624">
    <property type="entry name" value="Schiff_base-form_aldolases_CS"/>
</dbReference>
<dbReference type="NCBIfam" id="TIGR00674">
    <property type="entry name" value="dapA"/>
    <property type="match status" value="1"/>
</dbReference>
<dbReference type="PANTHER" id="PTHR12128:SF66">
    <property type="entry name" value="4-HYDROXY-2-OXOGLUTARATE ALDOLASE, MITOCHONDRIAL"/>
    <property type="match status" value="1"/>
</dbReference>
<dbReference type="PANTHER" id="PTHR12128">
    <property type="entry name" value="DIHYDRODIPICOLINATE SYNTHASE"/>
    <property type="match status" value="1"/>
</dbReference>
<dbReference type="Pfam" id="PF00701">
    <property type="entry name" value="DHDPS"/>
    <property type="match status" value="1"/>
</dbReference>
<dbReference type="PIRSF" id="PIRSF001365">
    <property type="entry name" value="DHDPS"/>
    <property type="match status" value="1"/>
</dbReference>
<dbReference type="PRINTS" id="PR00146">
    <property type="entry name" value="DHPICSNTHASE"/>
</dbReference>
<dbReference type="SMART" id="SM01130">
    <property type="entry name" value="DHDPS"/>
    <property type="match status" value="1"/>
</dbReference>
<dbReference type="SUPFAM" id="SSF51569">
    <property type="entry name" value="Aldolase"/>
    <property type="match status" value="1"/>
</dbReference>
<dbReference type="PROSITE" id="PS00665">
    <property type="entry name" value="DHDPS_1"/>
    <property type="match status" value="1"/>
</dbReference>
<dbReference type="PROSITE" id="PS00666">
    <property type="entry name" value="DHDPS_2"/>
    <property type="match status" value="1"/>
</dbReference>
<gene>
    <name evidence="1" type="primary">dapA</name>
    <name type="ordered locus">COXBURSA331_A1365</name>
</gene>
<reference key="1">
    <citation type="submission" date="2007-11" db="EMBL/GenBank/DDBJ databases">
        <title>Genome sequencing of phylogenetically and phenotypically diverse Coxiella burnetii isolates.</title>
        <authorList>
            <person name="Seshadri R."/>
            <person name="Samuel J.E."/>
        </authorList>
    </citation>
    <scope>NUCLEOTIDE SEQUENCE [LARGE SCALE GENOMIC DNA]</scope>
    <source>
        <strain>RSA 331 / Henzerling II</strain>
    </source>
</reference>
<organism>
    <name type="scientific">Coxiella burnetii (strain RSA 331 / Henzerling II)</name>
    <dbReference type="NCBI Taxonomy" id="360115"/>
    <lineage>
        <taxon>Bacteria</taxon>
        <taxon>Pseudomonadati</taxon>
        <taxon>Pseudomonadota</taxon>
        <taxon>Gammaproteobacteria</taxon>
        <taxon>Legionellales</taxon>
        <taxon>Coxiellaceae</taxon>
        <taxon>Coxiella</taxon>
    </lineage>
</organism>